<gene>
    <name type="primary">AKR2</name>
</gene>
<keyword id="KW-0012">Acyltransferase</keyword>
<keyword id="KW-0040">ANK repeat</keyword>
<keyword id="KW-0449">Lipoprotein</keyword>
<keyword id="KW-0472">Membrane</keyword>
<keyword id="KW-0564">Palmitate</keyword>
<keyword id="KW-0677">Repeat</keyword>
<keyword id="KW-0808">Transferase</keyword>
<keyword id="KW-0812">Transmembrane</keyword>
<keyword id="KW-1133">Transmembrane helix</keyword>
<name>AKR2_SACU7</name>
<dbReference type="EC" id="2.3.1.225"/>
<dbReference type="EMBL" id="AY144797">
    <property type="protein sequence ID" value="AAO32361.1"/>
    <property type="molecule type" value="Genomic_DNA"/>
</dbReference>
<dbReference type="SMR" id="Q876L4"/>
<dbReference type="GO" id="GO:0016020">
    <property type="term" value="C:membrane"/>
    <property type="evidence" value="ECO:0007669"/>
    <property type="project" value="UniProtKB-SubCell"/>
</dbReference>
<dbReference type="GO" id="GO:0019706">
    <property type="term" value="F:protein-cysteine S-palmitoyltransferase activity"/>
    <property type="evidence" value="ECO:0007669"/>
    <property type="project" value="UniProtKB-EC"/>
</dbReference>
<dbReference type="FunFam" id="1.25.40.20:FF:000301">
    <property type="entry name" value="Palmitoyltransferase"/>
    <property type="match status" value="1"/>
</dbReference>
<dbReference type="Gene3D" id="1.25.40.20">
    <property type="entry name" value="Ankyrin repeat-containing domain"/>
    <property type="match status" value="1"/>
</dbReference>
<dbReference type="InterPro" id="IPR002110">
    <property type="entry name" value="Ankyrin_rpt"/>
</dbReference>
<dbReference type="InterPro" id="IPR036770">
    <property type="entry name" value="Ankyrin_rpt-contain_sf"/>
</dbReference>
<dbReference type="InterPro" id="IPR001594">
    <property type="entry name" value="Palmitoyltrfase_DHHC"/>
</dbReference>
<dbReference type="PANTHER" id="PTHR24161">
    <property type="entry name" value="ANK_REP_REGION DOMAIN-CONTAINING PROTEIN-RELATED"/>
    <property type="match status" value="1"/>
</dbReference>
<dbReference type="PANTHER" id="PTHR24161:SF85">
    <property type="entry name" value="PALMITOYLTRANSFERASE HIP14"/>
    <property type="match status" value="1"/>
</dbReference>
<dbReference type="Pfam" id="PF12796">
    <property type="entry name" value="Ank_2"/>
    <property type="match status" value="2"/>
</dbReference>
<dbReference type="Pfam" id="PF01529">
    <property type="entry name" value="DHHC"/>
    <property type="match status" value="1"/>
</dbReference>
<dbReference type="SMART" id="SM00248">
    <property type="entry name" value="ANK"/>
    <property type="match status" value="6"/>
</dbReference>
<dbReference type="SUPFAM" id="SSF48403">
    <property type="entry name" value="Ankyrin repeat"/>
    <property type="match status" value="1"/>
</dbReference>
<dbReference type="PROSITE" id="PS50297">
    <property type="entry name" value="ANK_REP_REGION"/>
    <property type="match status" value="1"/>
</dbReference>
<dbReference type="PROSITE" id="PS50088">
    <property type="entry name" value="ANK_REPEAT"/>
    <property type="match status" value="3"/>
</dbReference>
<dbReference type="PROSITE" id="PS50216">
    <property type="entry name" value="DHHC"/>
    <property type="match status" value="1"/>
</dbReference>
<comment type="catalytic activity">
    <reaction>
        <text>L-cysteinyl-[protein] + hexadecanoyl-CoA = S-hexadecanoyl-L-cysteinyl-[protein] + CoA</text>
        <dbReference type="Rhea" id="RHEA:36683"/>
        <dbReference type="Rhea" id="RHEA-COMP:10131"/>
        <dbReference type="Rhea" id="RHEA-COMP:11032"/>
        <dbReference type="ChEBI" id="CHEBI:29950"/>
        <dbReference type="ChEBI" id="CHEBI:57287"/>
        <dbReference type="ChEBI" id="CHEBI:57379"/>
        <dbReference type="ChEBI" id="CHEBI:74151"/>
        <dbReference type="EC" id="2.3.1.225"/>
    </reaction>
</comment>
<comment type="subcellular location">
    <subcellularLocation>
        <location evidence="4">Membrane</location>
        <topology evidence="4">Multi-pass membrane protein</topology>
    </subcellularLocation>
</comment>
<comment type="domain">
    <text evidence="1">The DHHC domain is required for palmitoyltransferase activity.</text>
</comment>
<comment type="similarity">
    <text evidence="4">Belongs to the DHHC palmitoyltransferase family. AKR/ZDHHC17 subfamily.</text>
</comment>
<evidence type="ECO:0000250" key="1"/>
<evidence type="ECO:0000255" key="2"/>
<evidence type="ECO:0000255" key="3">
    <source>
        <dbReference type="PROSITE-ProRule" id="PRU00067"/>
    </source>
</evidence>
<evidence type="ECO:0000305" key="4"/>
<feature type="chain" id="PRO_0000212935" description="Probable palmitoyltransferase AKR2">
    <location>
        <begin position="1"/>
        <end position="730"/>
    </location>
</feature>
<feature type="transmembrane region" description="Helical" evidence="2">
    <location>
        <begin position="283"/>
        <end position="303"/>
    </location>
</feature>
<feature type="transmembrane region" description="Helical" evidence="2">
    <location>
        <begin position="309"/>
        <end position="328"/>
    </location>
</feature>
<feature type="transmembrane region" description="Helical" evidence="2">
    <location>
        <begin position="344"/>
        <end position="364"/>
    </location>
</feature>
<feature type="transmembrane region" description="Helical" evidence="2">
    <location>
        <begin position="376"/>
        <end position="396"/>
    </location>
</feature>
<feature type="transmembrane region" description="Helical" evidence="2">
    <location>
        <begin position="473"/>
        <end position="493"/>
    </location>
</feature>
<feature type="transmembrane region" description="Helical" evidence="2">
    <location>
        <begin position="530"/>
        <end position="550"/>
    </location>
</feature>
<feature type="repeat" description="ANK 1">
    <location>
        <begin position="32"/>
        <end position="62"/>
    </location>
</feature>
<feature type="repeat" description="ANK 2">
    <location>
        <begin position="66"/>
        <end position="95"/>
    </location>
</feature>
<feature type="repeat" description="ANK 3">
    <location>
        <begin position="100"/>
        <end position="129"/>
    </location>
</feature>
<feature type="repeat" description="ANK 4">
    <location>
        <begin position="133"/>
        <end position="166"/>
    </location>
</feature>
<feature type="repeat" description="ANK 5">
    <location>
        <begin position="172"/>
        <end position="201"/>
    </location>
</feature>
<feature type="repeat" description="ANK 6">
    <location>
        <begin position="205"/>
        <end position="234"/>
    </location>
</feature>
<feature type="domain" description="DHHC" evidence="3">
    <location>
        <begin position="429"/>
        <end position="479"/>
    </location>
</feature>
<feature type="active site" description="S-palmitoyl cysteine intermediate" evidence="1">
    <location>
        <position position="459"/>
    </location>
</feature>
<accession>Q876L4</accession>
<protein>
    <recommendedName>
        <fullName>Probable palmitoyltransferase AKR2</fullName>
        <ecNumber>2.3.1.225</ecNumber>
    </recommendedName>
    <alternativeName>
        <fullName>Ankyrin repeat-containing protein AKR2</fullName>
    </alternativeName>
</protein>
<proteinExistence type="inferred from homology"/>
<organism>
    <name type="scientific">Saccharomyces uvarum (strain ATCC 76518 / CBS 7001 / CLIB 283 / NBRC 10550 / MCYC 623 / NCYC 2669 / NRRL Y-11845)</name>
    <name type="common">Yeast</name>
    <name type="synonym">Saccharomyces bayanus var. uvarum</name>
    <dbReference type="NCBI Taxonomy" id="659244"/>
    <lineage>
        <taxon>Eukaryota</taxon>
        <taxon>Fungi</taxon>
        <taxon>Dikarya</taxon>
        <taxon>Ascomycota</taxon>
        <taxon>Saccharomycotina</taxon>
        <taxon>Saccharomycetes</taxon>
        <taxon>Saccharomycetales</taxon>
        <taxon>Saccharomycetaceae</taxon>
        <taxon>Saccharomyces</taxon>
    </lineage>
</organism>
<reference key="1">
    <citation type="journal article" date="2003" name="Nature">
        <title>Yeast genome duplication was followed by asynchronous differentiation of duplicated genes.</title>
        <authorList>
            <person name="Langkjaer R.B."/>
            <person name="Cliften P.F."/>
            <person name="Johnston M."/>
            <person name="Piskur J."/>
        </authorList>
    </citation>
    <scope>NUCLEOTIDE SEQUENCE [GENOMIC DNA]</scope>
    <source>
        <strain>623-6C / CBS 9787 / CLIB 533</strain>
    </source>
</reference>
<sequence length="730" mass="83533">MSEVSRDENMRGTSDGIGSQAQFLESELDTEFVVETFIEAIKDDDLKVVKEVVESGAIDINKDCIDELPGLHWACIKNRFSIAKFLIRRGANVNQTAGPERATALHWAARYGHVYIVDLLLKHGANPTLIDGQGLNILHFSVYSSNIMLVVYVLYFVVSNNNNVDIDSRDYNNRTPLLWAAYQGDFLTVELLLKFGATVALTDNRGFNALHCALVGGDQRAICDLILSGANFYERNNQKQDCFDLAKGMGTKALFEQALQHHGYDKLGNQKDKIFKKNSHSQLMIFLSPFALMIYTYLISLILSPPLAIALSLLVIVVTVNSLKKFVLPSLTRKNIYKVSLVRTPFFSGLFMSTFSFLLFIWVKKLYPYSVFDYTAKDAQLLITSLFTFVLFLKLVRSDPGCLKMDDSTTPVRETINQLIQIGKYDRNNFCVETLERKPLRSKYSLFSGALVARFNHYCPWVYNDIGLKNHKLFMFFAFSVQYEMFLFMWLCLEYFKKTNHIYEQVEEYAKCTFLKNETLCKGSNYDPSTFFLFIWISMNFVWLGGMLIVQCFQIFKGITSPELYALIKEERKAEALNLIPFENPIFSIPNGKNRDTVPEDPNATTVTHTISIDSLEPRNRRHAILDACFSMVGLNQWVVTFKEMLGISNLLRGNSQPRHNHSLLRNFLVANHWKTNLTDFWLNSDVTAPLWQRFFYSSDTSKAMLGGVEVDYYQLYELPAREGEPISSN</sequence>